<proteinExistence type="inferred from homology"/>
<sequence length="527" mass="57320">MHSTNLLLEEPIRMASILEPSKPSFFPAMTKIVGTLGPKSRAVDTISSCLKAGMSVARFDFSWGDAEYHQETLENLKLAIKSTKKLCAVMLDTVGPELQVVNKSEAAISLEANGTVVLTPDQGQEASSELLPINFSGLAKALKPGATIFVGQYLFTGSETTSVWLEVSEVKGDDVVCVIKNSATLAGSLFTLHCSQIHIDLPTLSDEDKEVIRRWGAPNKIDFLSLSYTRHAEDVRQAREFLSKLGDLSQTQIFAKIENVEGLNHFDEILQEADGIILSRGNLGIDLPPEKVFLFQKSALHKCNMAGKPAVVTRVVDSMTDNLRPTRAEATDVANAVLDGSDAILLGAETLRGLYPVETISIVGKICAEAEKVFNQDLYFKRTVKYVGEPMTHLESIASSAVRAAIKVKASVIICFTSSGRAARLIAKYRPTMPVLSVVIPRLKTNQLRWSFTGAFEARQSLIVRGLFPMLADPRHPAESTSATNESVLKVALDHGKASGVIKSHDRVVVCQKVGDSSVVKIIELDD</sequence>
<gene>
    <name evidence="7" type="ORF">OsI_35105</name>
</gene>
<dbReference type="EC" id="2.7.1.40" evidence="6"/>
<dbReference type="EMBL" id="CM000136">
    <property type="protein sequence ID" value="EEC67675.1"/>
    <property type="molecule type" value="Genomic_DNA"/>
</dbReference>
<dbReference type="SMR" id="B8BJ39"/>
<dbReference type="STRING" id="39946.B8BJ39"/>
<dbReference type="EnsemblPlants" id="BGIOSGA034500-TA">
    <property type="protein sequence ID" value="BGIOSGA034500-PA"/>
    <property type="gene ID" value="BGIOSGA034500"/>
</dbReference>
<dbReference type="EnsemblPlants" id="OsGoSa_11g0003310.01">
    <property type="protein sequence ID" value="OsGoSa_11g0003310.01"/>
    <property type="gene ID" value="OsGoSa_11g0003310"/>
</dbReference>
<dbReference type="EnsemblPlants" id="OsIR64_11g0003310.01">
    <property type="protein sequence ID" value="OsIR64_11g0003310.01"/>
    <property type="gene ID" value="OsIR64_11g0003310"/>
</dbReference>
<dbReference type="EnsemblPlants" id="OsKYG_11g0003330.01">
    <property type="protein sequence ID" value="OsKYG_11g0003330.01"/>
    <property type="gene ID" value="OsKYG_11g0003330"/>
</dbReference>
<dbReference type="EnsemblPlants" id="OsLaMu_11g0003320.01">
    <property type="protein sequence ID" value="OsLaMu_11g0003320.01"/>
    <property type="gene ID" value="OsLaMu_11g0003320"/>
</dbReference>
<dbReference type="EnsemblPlants" id="OsLiXu_11g0003220.01">
    <property type="protein sequence ID" value="OsLiXu_11g0003220.01"/>
    <property type="gene ID" value="OsLiXu_11g0003220"/>
</dbReference>
<dbReference type="EnsemblPlants" id="OsMH63_11G003360_01">
    <property type="protein sequence ID" value="OsMH63_11G003360_01"/>
    <property type="gene ID" value="OsMH63_11G003360"/>
</dbReference>
<dbReference type="EnsemblPlants" id="OsPr106_11g0003240.01">
    <property type="protein sequence ID" value="OsPr106_11g0003240.01"/>
    <property type="gene ID" value="OsPr106_11g0003240"/>
</dbReference>
<dbReference type="EnsemblPlants" id="OsZS97_11G003270_01">
    <property type="protein sequence ID" value="OsZS97_11G003270_01"/>
    <property type="gene ID" value="OsZS97_11G003270"/>
</dbReference>
<dbReference type="Gramene" id="BGIOSGA034500-TA">
    <property type="protein sequence ID" value="BGIOSGA034500-PA"/>
    <property type="gene ID" value="BGIOSGA034500"/>
</dbReference>
<dbReference type="Gramene" id="OsGoSa_11g0003310.01">
    <property type="protein sequence ID" value="OsGoSa_11g0003310.01"/>
    <property type="gene ID" value="OsGoSa_11g0003310"/>
</dbReference>
<dbReference type="Gramene" id="OsIR64_11g0003310.01">
    <property type="protein sequence ID" value="OsIR64_11g0003310.01"/>
    <property type="gene ID" value="OsIR64_11g0003310"/>
</dbReference>
<dbReference type="Gramene" id="OsKYG_11g0003330.01">
    <property type="protein sequence ID" value="OsKYG_11g0003330.01"/>
    <property type="gene ID" value="OsKYG_11g0003330"/>
</dbReference>
<dbReference type="Gramene" id="OsLaMu_11g0003320.01">
    <property type="protein sequence ID" value="OsLaMu_11g0003320.01"/>
    <property type="gene ID" value="OsLaMu_11g0003320"/>
</dbReference>
<dbReference type="Gramene" id="OsLiXu_11g0003220.01">
    <property type="protein sequence ID" value="OsLiXu_11g0003220.01"/>
    <property type="gene ID" value="OsLiXu_11g0003220"/>
</dbReference>
<dbReference type="Gramene" id="OsMH63_11G003360_01">
    <property type="protein sequence ID" value="OsMH63_11G003360_01"/>
    <property type="gene ID" value="OsMH63_11G003360"/>
</dbReference>
<dbReference type="Gramene" id="OsPr106_11g0003240.01">
    <property type="protein sequence ID" value="OsPr106_11g0003240.01"/>
    <property type="gene ID" value="OsPr106_11g0003240"/>
</dbReference>
<dbReference type="Gramene" id="OsZS97_11G003270_01">
    <property type="protein sequence ID" value="OsZS97_11G003270_01"/>
    <property type="gene ID" value="OsZS97_11G003270"/>
</dbReference>
<dbReference type="HOGENOM" id="CLU_015439_9_1_1"/>
<dbReference type="OMA" id="VRGLYPM"/>
<dbReference type="OrthoDB" id="108365at2759"/>
<dbReference type="UniPathway" id="UPA00109">
    <property type="reaction ID" value="UER00188"/>
</dbReference>
<dbReference type="Proteomes" id="UP000007015">
    <property type="component" value="Chromosome 11"/>
</dbReference>
<dbReference type="GO" id="GO:0005829">
    <property type="term" value="C:cytosol"/>
    <property type="evidence" value="ECO:0007669"/>
    <property type="project" value="UniProtKB-SubCell"/>
</dbReference>
<dbReference type="GO" id="GO:0005524">
    <property type="term" value="F:ATP binding"/>
    <property type="evidence" value="ECO:0007669"/>
    <property type="project" value="UniProtKB-KW"/>
</dbReference>
<dbReference type="GO" id="GO:0016301">
    <property type="term" value="F:kinase activity"/>
    <property type="evidence" value="ECO:0007669"/>
    <property type="project" value="UniProtKB-KW"/>
</dbReference>
<dbReference type="GO" id="GO:0000287">
    <property type="term" value="F:magnesium ion binding"/>
    <property type="evidence" value="ECO:0007669"/>
    <property type="project" value="InterPro"/>
</dbReference>
<dbReference type="GO" id="GO:0030955">
    <property type="term" value="F:potassium ion binding"/>
    <property type="evidence" value="ECO:0007669"/>
    <property type="project" value="InterPro"/>
</dbReference>
<dbReference type="GO" id="GO:0004743">
    <property type="term" value="F:pyruvate kinase activity"/>
    <property type="evidence" value="ECO:0007669"/>
    <property type="project" value="UniProtKB-EC"/>
</dbReference>
<dbReference type="FunFam" id="2.40.33.10:FF:000004">
    <property type="entry name" value="Pyruvate kinase"/>
    <property type="match status" value="1"/>
</dbReference>
<dbReference type="FunFam" id="3.40.1380.20:FF:000006">
    <property type="entry name" value="Pyruvate kinase"/>
    <property type="match status" value="1"/>
</dbReference>
<dbReference type="Gene3D" id="3.20.20.60">
    <property type="entry name" value="Phosphoenolpyruvate-binding domains"/>
    <property type="match status" value="1"/>
</dbReference>
<dbReference type="Gene3D" id="2.40.33.10">
    <property type="entry name" value="PK beta-barrel domain-like"/>
    <property type="match status" value="1"/>
</dbReference>
<dbReference type="Gene3D" id="3.40.1380.20">
    <property type="entry name" value="Pyruvate kinase, C-terminal domain"/>
    <property type="match status" value="1"/>
</dbReference>
<dbReference type="InterPro" id="IPR001697">
    <property type="entry name" value="Pyr_Knase"/>
</dbReference>
<dbReference type="InterPro" id="IPR015813">
    <property type="entry name" value="Pyrv/PenolPyrv_kinase-like_dom"/>
</dbReference>
<dbReference type="InterPro" id="IPR040442">
    <property type="entry name" value="Pyrv_kinase-like_dom_sf"/>
</dbReference>
<dbReference type="InterPro" id="IPR011037">
    <property type="entry name" value="Pyrv_Knase-like_insert_dom_sf"/>
</dbReference>
<dbReference type="InterPro" id="IPR015793">
    <property type="entry name" value="Pyrv_Knase_brl"/>
</dbReference>
<dbReference type="InterPro" id="IPR015795">
    <property type="entry name" value="Pyrv_Knase_C"/>
</dbReference>
<dbReference type="InterPro" id="IPR036918">
    <property type="entry name" value="Pyrv_Knase_C_sf"/>
</dbReference>
<dbReference type="InterPro" id="IPR015806">
    <property type="entry name" value="Pyrv_Knase_insert_dom_sf"/>
</dbReference>
<dbReference type="NCBIfam" id="TIGR01064">
    <property type="entry name" value="pyruv_kin"/>
    <property type="match status" value="1"/>
</dbReference>
<dbReference type="PANTHER" id="PTHR11817">
    <property type="entry name" value="PYRUVATE KINASE"/>
    <property type="match status" value="1"/>
</dbReference>
<dbReference type="Pfam" id="PF00224">
    <property type="entry name" value="PK"/>
    <property type="match status" value="1"/>
</dbReference>
<dbReference type="Pfam" id="PF02887">
    <property type="entry name" value="PK_C"/>
    <property type="match status" value="1"/>
</dbReference>
<dbReference type="PRINTS" id="PR01050">
    <property type="entry name" value="PYRUVTKNASE"/>
</dbReference>
<dbReference type="SUPFAM" id="SSF51621">
    <property type="entry name" value="Phosphoenolpyruvate/pyruvate domain"/>
    <property type="match status" value="1"/>
</dbReference>
<dbReference type="SUPFAM" id="SSF50800">
    <property type="entry name" value="PK beta-barrel domain-like"/>
    <property type="match status" value="1"/>
</dbReference>
<dbReference type="SUPFAM" id="SSF52935">
    <property type="entry name" value="PK C-terminal domain-like"/>
    <property type="match status" value="1"/>
</dbReference>
<accession>B8BJ39</accession>
<comment type="function">
    <text evidence="4">Key regulatory enzyme of the glycolytic pathway that catalyzes the final step of glycolysis, converting ADP and phosphoenolpyruvate (PEP) to ATP and pyruvate by essentially irreversible transphosphorylation. Is critical for plant growth and development.</text>
</comment>
<comment type="catalytic activity">
    <reaction evidence="6">
        <text>pyruvate + ATP = phosphoenolpyruvate + ADP + H(+)</text>
        <dbReference type="Rhea" id="RHEA:18157"/>
        <dbReference type="ChEBI" id="CHEBI:15361"/>
        <dbReference type="ChEBI" id="CHEBI:15378"/>
        <dbReference type="ChEBI" id="CHEBI:30616"/>
        <dbReference type="ChEBI" id="CHEBI:58702"/>
        <dbReference type="ChEBI" id="CHEBI:456216"/>
        <dbReference type="EC" id="2.7.1.40"/>
    </reaction>
</comment>
<comment type="cofactor">
    <cofactor evidence="5">
        <name>Mg(2+)</name>
        <dbReference type="ChEBI" id="CHEBI:18420"/>
    </cofactor>
</comment>
<comment type="cofactor">
    <cofactor evidence="5">
        <name>K(+)</name>
        <dbReference type="ChEBI" id="CHEBI:29103"/>
    </cofactor>
</comment>
<comment type="pathway">
    <text evidence="6">Carbohydrate degradation; glycolysis; pyruvate from D-glyceraldehyde 3-phosphate: step 5/5.</text>
</comment>
<comment type="subunit">
    <text evidence="3">Homotetramer.</text>
</comment>
<comment type="subcellular location">
    <subcellularLocation>
        <location evidence="4">Cytoplasm</location>
        <location evidence="4">Cytosol</location>
    </subcellularLocation>
</comment>
<comment type="similarity">
    <text evidence="6">Belongs to the pyruvate kinase family.</text>
</comment>
<evidence type="ECO:0000250" key="1">
    <source>
        <dbReference type="UniProtKB" id="P00549"/>
    </source>
</evidence>
<evidence type="ECO:0000250" key="2">
    <source>
        <dbReference type="UniProtKB" id="P14618"/>
    </source>
</evidence>
<evidence type="ECO:0000250" key="3">
    <source>
        <dbReference type="UniProtKB" id="P30613"/>
    </source>
</evidence>
<evidence type="ECO:0000250" key="4">
    <source>
        <dbReference type="UniProtKB" id="Q2RAK2"/>
    </source>
</evidence>
<evidence type="ECO:0000250" key="5">
    <source>
        <dbReference type="UniProtKB" id="Q9LIK0"/>
    </source>
</evidence>
<evidence type="ECO:0000305" key="6"/>
<evidence type="ECO:0000312" key="7">
    <source>
        <dbReference type="EMBL" id="EEC67675.1"/>
    </source>
</evidence>
<name>KPYC1_ORYSI</name>
<keyword id="KW-0067">ATP-binding</keyword>
<keyword id="KW-0963">Cytoplasm</keyword>
<keyword id="KW-0324">Glycolysis</keyword>
<keyword id="KW-0418">Kinase</keyword>
<keyword id="KW-0460">Magnesium</keyword>
<keyword id="KW-0479">Metal-binding</keyword>
<keyword id="KW-0547">Nucleotide-binding</keyword>
<keyword id="KW-0630">Potassium</keyword>
<keyword id="KW-0670">Pyruvate</keyword>
<keyword id="KW-1185">Reference proteome</keyword>
<keyword id="KW-0808">Transferase</keyword>
<protein>
    <recommendedName>
        <fullName evidence="6">Pyruvate kinase 1, cytosolic</fullName>
        <shortName evidence="6">OsPK1</shortName>
        <ecNumber evidence="6">2.7.1.40</ecNumber>
    </recommendedName>
</protein>
<feature type="chain" id="PRO_0000433956" description="Pyruvate kinase 1, cytosolic">
    <location>
        <begin position="1"/>
        <end position="527"/>
    </location>
</feature>
<feature type="binding site" evidence="3">
    <location>
        <position position="58"/>
    </location>
    <ligand>
        <name>substrate</name>
    </ligand>
</feature>
<feature type="binding site" evidence="2">
    <location>
        <begin position="60"/>
        <end position="63"/>
    </location>
    <ligand>
        <name>ATP</name>
        <dbReference type="ChEBI" id="CHEBI:30616"/>
    </ligand>
</feature>
<feature type="binding site" evidence="3">
    <location>
        <position position="60"/>
    </location>
    <ligand>
        <name>K(+)</name>
        <dbReference type="ChEBI" id="CHEBI:29103"/>
    </ligand>
</feature>
<feature type="binding site" evidence="3">
    <location>
        <position position="62"/>
    </location>
    <ligand>
        <name>K(+)</name>
        <dbReference type="ChEBI" id="CHEBI:29103"/>
    </ligand>
</feature>
<feature type="binding site" evidence="3">
    <location>
        <position position="92"/>
    </location>
    <ligand>
        <name>K(+)</name>
        <dbReference type="ChEBI" id="CHEBI:29103"/>
    </ligand>
</feature>
<feature type="binding site" evidence="3">
    <location>
        <position position="93"/>
    </location>
    <ligand>
        <name>K(+)</name>
        <dbReference type="ChEBI" id="CHEBI:29103"/>
    </ligand>
</feature>
<feature type="binding site" evidence="3">
    <location>
        <position position="256"/>
    </location>
    <ligand>
        <name>substrate</name>
    </ligand>
</feature>
<feature type="binding site" evidence="2">
    <location>
        <position position="258"/>
    </location>
    <ligand>
        <name>Mg(2+)</name>
        <dbReference type="ChEBI" id="CHEBI:18420"/>
    </ligand>
</feature>
<feature type="binding site" evidence="3">
    <location>
        <position position="281"/>
    </location>
    <ligand>
        <name>substrate</name>
    </ligand>
</feature>
<feature type="binding site" evidence="2">
    <location>
        <position position="282"/>
    </location>
    <ligand>
        <name>Mg(2+)</name>
        <dbReference type="ChEBI" id="CHEBI:18420"/>
    </ligand>
</feature>
<feature type="binding site" evidence="3">
    <location>
        <position position="282"/>
    </location>
    <ligand>
        <name>substrate</name>
    </ligand>
</feature>
<feature type="binding site" evidence="3">
    <location>
        <position position="313"/>
    </location>
    <ligand>
        <name>substrate</name>
    </ligand>
</feature>
<feature type="site" description="Transition state stabilizer" evidence="1">
    <location>
        <position position="256"/>
    </location>
</feature>
<reference key="1">
    <citation type="journal article" date="2005" name="PLoS Biol.">
        <title>The genomes of Oryza sativa: a history of duplications.</title>
        <authorList>
            <person name="Yu J."/>
            <person name="Wang J."/>
            <person name="Lin W."/>
            <person name="Li S."/>
            <person name="Li H."/>
            <person name="Zhou J."/>
            <person name="Ni P."/>
            <person name="Dong W."/>
            <person name="Hu S."/>
            <person name="Zeng C."/>
            <person name="Zhang J."/>
            <person name="Zhang Y."/>
            <person name="Li R."/>
            <person name="Xu Z."/>
            <person name="Li S."/>
            <person name="Li X."/>
            <person name="Zheng H."/>
            <person name="Cong L."/>
            <person name="Lin L."/>
            <person name="Yin J."/>
            <person name="Geng J."/>
            <person name="Li G."/>
            <person name="Shi J."/>
            <person name="Liu J."/>
            <person name="Lv H."/>
            <person name="Li J."/>
            <person name="Wang J."/>
            <person name="Deng Y."/>
            <person name="Ran L."/>
            <person name="Shi X."/>
            <person name="Wang X."/>
            <person name="Wu Q."/>
            <person name="Li C."/>
            <person name="Ren X."/>
            <person name="Wang J."/>
            <person name="Wang X."/>
            <person name="Li D."/>
            <person name="Liu D."/>
            <person name="Zhang X."/>
            <person name="Ji Z."/>
            <person name="Zhao W."/>
            <person name="Sun Y."/>
            <person name="Zhang Z."/>
            <person name="Bao J."/>
            <person name="Han Y."/>
            <person name="Dong L."/>
            <person name="Ji J."/>
            <person name="Chen P."/>
            <person name="Wu S."/>
            <person name="Liu J."/>
            <person name="Xiao Y."/>
            <person name="Bu D."/>
            <person name="Tan J."/>
            <person name="Yang L."/>
            <person name="Ye C."/>
            <person name="Zhang J."/>
            <person name="Xu J."/>
            <person name="Zhou Y."/>
            <person name="Yu Y."/>
            <person name="Zhang B."/>
            <person name="Zhuang S."/>
            <person name="Wei H."/>
            <person name="Liu B."/>
            <person name="Lei M."/>
            <person name="Yu H."/>
            <person name="Li Y."/>
            <person name="Xu H."/>
            <person name="Wei S."/>
            <person name="He X."/>
            <person name="Fang L."/>
            <person name="Zhang Z."/>
            <person name="Zhang Y."/>
            <person name="Huang X."/>
            <person name="Su Z."/>
            <person name="Tong W."/>
            <person name="Li J."/>
            <person name="Tong Z."/>
            <person name="Li S."/>
            <person name="Ye J."/>
            <person name="Wang L."/>
            <person name="Fang L."/>
            <person name="Lei T."/>
            <person name="Chen C.-S."/>
            <person name="Chen H.-C."/>
            <person name="Xu Z."/>
            <person name="Li H."/>
            <person name="Huang H."/>
            <person name="Zhang F."/>
            <person name="Xu H."/>
            <person name="Li N."/>
            <person name="Zhao C."/>
            <person name="Li S."/>
            <person name="Dong L."/>
            <person name="Huang Y."/>
            <person name="Li L."/>
            <person name="Xi Y."/>
            <person name="Qi Q."/>
            <person name="Li W."/>
            <person name="Zhang B."/>
            <person name="Hu W."/>
            <person name="Zhang Y."/>
            <person name="Tian X."/>
            <person name="Jiao Y."/>
            <person name="Liang X."/>
            <person name="Jin J."/>
            <person name="Gao L."/>
            <person name="Zheng W."/>
            <person name="Hao B."/>
            <person name="Liu S.-M."/>
            <person name="Wang W."/>
            <person name="Yuan L."/>
            <person name="Cao M."/>
            <person name="McDermott J."/>
            <person name="Samudrala R."/>
            <person name="Wang J."/>
            <person name="Wong G.K.-S."/>
            <person name="Yang H."/>
        </authorList>
    </citation>
    <scope>NUCLEOTIDE SEQUENCE [LARGE SCALE GENOMIC DNA]</scope>
    <source>
        <strain>cv. 93-11</strain>
    </source>
</reference>
<organism>
    <name type="scientific">Oryza sativa subsp. indica</name>
    <name type="common">Rice</name>
    <dbReference type="NCBI Taxonomy" id="39946"/>
    <lineage>
        <taxon>Eukaryota</taxon>
        <taxon>Viridiplantae</taxon>
        <taxon>Streptophyta</taxon>
        <taxon>Embryophyta</taxon>
        <taxon>Tracheophyta</taxon>
        <taxon>Spermatophyta</taxon>
        <taxon>Magnoliopsida</taxon>
        <taxon>Liliopsida</taxon>
        <taxon>Poales</taxon>
        <taxon>Poaceae</taxon>
        <taxon>BOP clade</taxon>
        <taxon>Oryzoideae</taxon>
        <taxon>Oryzeae</taxon>
        <taxon>Oryzinae</taxon>
        <taxon>Oryza</taxon>
        <taxon>Oryza sativa</taxon>
    </lineage>
</organism>